<organism>
    <name type="scientific">Mesocricetus auratus</name>
    <name type="common">Golden hamster</name>
    <dbReference type="NCBI Taxonomy" id="10036"/>
    <lineage>
        <taxon>Eukaryota</taxon>
        <taxon>Metazoa</taxon>
        <taxon>Chordata</taxon>
        <taxon>Craniata</taxon>
        <taxon>Vertebrata</taxon>
        <taxon>Euteleostomi</taxon>
        <taxon>Mammalia</taxon>
        <taxon>Eutheria</taxon>
        <taxon>Euarchontoglires</taxon>
        <taxon>Glires</taxon>
        <taxon>Rodentia</taxon>
        <taxon>Myomorpha</taxon>
        <taxon>Muroidea</taxon>
        <taxon>Cricetidae</taxon>
        <taxon>Cricetinae</taxon>
        <taxon>Mesocricetus</taxon>
    </lineage>
</organism>
<reference key="1">
    <citation type="submission" date="1993-07" db="EMBL/GenBank/DDBJ databases">
        <title>Nucleotide sequence of hamster cyclinA cDNA.</title>
        <authorList>
            <person name="Shiraki T."/>
            <person name="Yamashita K."/>
            <person name="Nishitani H."/>
            <person name="Nishimoto T."/>
        </authorList>
    </citation>
    <scope>NUCLEOTIDE SEQUENCE [MRNA]</scope>
</reference>
<sequence>MPGSSRQSGREAGSALLSLQQEDQENVNPEKAAPDQRARAALKTGNARGNAPQQRLKARRVAPLKDLSINDEHVASGPSWKAASKQPAFTIHVDEEEDTQKIPPEHKEMRCEDALAFNAAVSLPGARKPLVPLDYPMDGSFESPHAMDMSIVLEEEKPVSVNEVPDYHEDIHTYLREMEIKCKPKVGYMKKQPDITNSMRAILVDWLVEVGEEYKLQNETLHLAVNYIDRFLSSMSVLRGKLQLVGTAAMLLASKFEEIYPPEVAEFVYITDDTYSKKQVLRMEHLVLKVLAFDLAAPTVNQFLNQYFLHQQPANCKVESLAMFLGELSLIDADPYLKYLPSLIAGAAFHLALYTVTGQSWPESLVQKTGYTLESLKPCLMDLHQTYLRAAQHTQQSIREKYKHSKYHGVSLLNPPETLNV</sequence>
<gene>
    <name evidence="1" type="primary">CCNA2</name>
</gene>
<evidence type="ECO:0000250" key="1">
    <source>
        <dbReference type="UniProtKB" id="P20248"/>
    </source>
</evidence>
<evidence type="ECO:0000256" key="2">
    <source>
        <dbReference type="SAM" id="MobiDB-lite"/>
    </source>
</evidence>
<evidence type="ECO:0000305" key="3"/>
<evidence type="ECO:0000312" key="4">
    <source>
        <dbReference type="EMBL" id="BAA04128.1"/>
    </source>
</evidence>
<proteinExistence type="evidence at transcript level"/>
<feature type="chain" id="PRO_0000080339" description="Cyclin-A2">
    <location>
        <begin position="1"/>
        <end position="421"/>
    </location>
</feature>
<feature type="region of interest" description="Disordered" evidence="2">
    <location>
        <begin position="1"/>
        <end position="60"/>
    </location>
</feature>
<feature type="modified residue" description="N-acetylmethionine" evidence="1">
    <location>
        <position position="1"/>
    </location>
</feature>
<feature type="modified residue" description="Phosphoserine" evidence="1">
    <location>
        <position position="5"/>
    </location>
</feature>
<comment type="function">
    <text evidence="1">Cyclin which controls both the G1/S and the G2/M transition phases of the cell cycle. Functions through the formation of specific serine/threonine kinase holoenzyme complexes with the cyclin-dependent protein kinases CDK1 and CDK2. The cyclin subunit confers the substrate specificity of these complexes and differentially interacts with and activates CDK1 and CDK2 throughout the cell cycle.</text>
</comment>
<comment type="subunit">
    <text evidence="1">Interacts with the CDK1 and CDK2 protein kinases to form serine/threonine kinase holoenzyme complexes. Interacts with CDK1 (hyperphosphorylated form in G1 and underphosphorylated forms in S and G2). Interacts with CDK2; the interaction increases from G1 to G2. Interacts (associated with CDK2 but not with CDK1) with SCAPER; regulates the activity of CCNA2/CDK2 by transiently maintaining CCNA2 in the cytoplasm. Forms a ternary complex with CDK2 and CDKN1B; CDKN1B inhibits the kinase activity of CDK2 through conformational rearrangements. Interacts with INCA1.</text>
</comment>
<comment type="subcellular location">
    <subcellularLocation>
        <location evidence="1">Nucleus</location>
    </subcellularLocation>
    <subcellularLocation>
        <location evidence="1">Cytoplasm</location>
    </subcellularLocation>
    <text evidence="1">Exclusively nuclear during interphase. Detected in the nucleus and the cytoplasm at prophase. Cytoplasmic when associated with SCAPER.</text>
</comment>
<comment type="PTM">
    <text evidence="1">Polyubiquitinated via 'Lys-11'-linked ubiquitin by the anaphase-promoting complex (APC/C), leading to its degradation by the proteasome. Deubiquitinated and stabilized by USP37 enables entry into S phase. Ubiquitinated during the G1 phase by the SCF(FBXO31) complex, leading to its proteasomal degradation.</text>
</comment>
<comment type="similarity">
    <text evidence="3">Belongs to the cyclin family. Cyclin AB subfamily.</text>
</comment>
<accession>P37881</accession>
<dbReference type="EMBL" id="D17295">
    <property type="protein sequence ID" value="BAA04128.1"/>
    <property type="molecule type" value="mRNA"/>
</dbReference>
<dbReference type="RefSeq" id="NP_001268563.1">
    <property type="nucleotide sequence ID" value="NM_001281634.1"/>
</dbReference>
<dbReference type="SMR" id="P37881"/>
<dbReference type="STRING" id="10036.ENSMAUP00000020143"/>
<dbReference type="Ensembl" id="ENSMAUT00000024130">
    <property type="protein sequence ID" value="ENSMAUP00000020143"/>
    <property type="gene ID" value="ENSMAUG00000018247"/>
</dbReference>
<dbReference type="GeneID" id="101835930"/>
<dbReference type="KEGG" id="maua:101835930"/>
<dbReference type="CTD" id="890"/>
<dbReference type="eggNOG" id="KOG0654">
    <property type="taxonomic scope" value="Eukaryota"/>
</dbReference>
<dbReference type="OrthoDB" id="5590282at2759"/>
<dbReference type="Proteomes" id="UP000189706">
    <property type="component" value="Unplaced"/>
</dbReference>
<dbReference type="GO" id="GO:0097122">
    <property type="term" value="C:cyclin A2-CDK1 complex"/>
    <property type="evidence" value="ECO:0007669"/>
    <property type="project" value="Ensembl"/>
</dbReference>
<dbReference type="GO" id="GO:0097124">
    <property type="term" value="C:cyclin A2-CDK2 complex"/>
    <property type="evidence" value="ECO:0007669"/>
    <property type="project" value="Ensembl"/>
</dbReference>
<dbReference type="GO" id="GO:0000307">
    <property type="term" value="C:cyclin-dependent protein kinase holoenzyme complex"/>
    <property type="evidence" value="ECO:0000250"/>
    <property type="project" value="UniProtKB"/>
</dbReference>
<dbReference type="GO" id="GO:0005737">
    <property type="term" value="C:cytoplasm"/>
    <property type="evidence" value="ECO:0000250"/>
    <property type="project" value="UniProtKB"/>
</dbReference>
<dbReference type="GO" id="GO:0005829">
    <property type="term" value="C:cytosol"/>
    <property type="evidence" value="ECO:0007669"/>
    <property type="project" value="Ensembl"/>
</dbReference>
<dbReference type="GO" id="GO:0001939">
    <property type="term" value="C:female pronucleus"/>
    <property type="evidence" value="ECO:0007669"/>
    <property type="project" value="Ensembl"/>
</dbReference>
<dbReference type="GO" id="GO:0001940">
    <property type="term" value="C:male pronucleus"/>
    <property type="evidence" value="ECO:0007669"/>
    <property type="project" value="Ensembl"/>
</dbReference>
<dbReference type="GO" id="GO:0005654">
    <property type="term" value="C:nucleoplasm"/>
    <property type="evidence" value="ECO:0007669"/>
    <property type="project" value="Ensembl"/>
</dbReference>
<dbReference type="GO" id="GO:0005634">
    <property type="term" value="C:nucleus"/>
    <property type="evidence" value="ECO:0000250"/>
    <property type="project" value="UniProtKB"/>
</dbReference>
<dbReference type="GO" id="GO:0016538">
    <property type="term" value="F:cyclin-dependent protein serine/threonine kinase regulator activity"/>
    <property type="evidence" value="ECO:0007669"/>
    <property type="project" value="Ensembl"/>
</dbReference>
<dbReference type="GO" id="GO:0019904">
    <property type="term" value="F:protein domain specific binding"/>
    <property type="evidence" value="ECO:0007669"/>
    <property type="project" value="Ensembl"/>
</dbReference>
<dbReference type="GO" id="GO:0019901">
    <property type="term" value="F:protein kinase binding"/>
    <property type="evidence" value="ECO:0007669"/>
    <property type="project" value="Ensembl"/>
</dbReference>
<dbReference type="GO" id="GO:0044843">
    <property type="term" value="P:cell cycle G1/S phase transition"/>
    <property type="evidence" value="ECO:0000250"/>
    <property type="project" value="UniProtKB"/>
</dbReference>
<dbReference type="GO" id="GO:0051301">
    <property type="term" value="P:cell division"/>
    <property type="evidence" value="ECO:0007669"/>
    <property type="project" value="UniProtKB-KW"/>
</dbReference>
<dbReference type="GO" id="GO:0006351">
    <property type="term" value="P:DNA-templated transcription"/>
    <property type="evidence" value="ECO:0007669"/>
    <property type="project" value="Ensembl"/>
</dbReference>
<dbReference type="GO" id="GO:0000086">
    <property type="term" value="P:G2/M transition of mitotic cell cycle"/>
    <property type="evidence" value="ECO:0000250"/>
    <property type="project" value="UniProtKB"/>
</dbReference>
<dbReference type="GO" id="GO:0045893">
    <property type="term" value="P:positive regulation of DNA-templated transcription"/>
    <property type="evidence" value="ECO:0007669"/>
    <property type="project" value="Ensembl"/>
</dbReference>
<dbReference type="GO" id="GO:0043687">
    <property type="term" value="P:post-translational protein modification"/>
    <property type="evidence" value="ECO:0007669"/>
    <property type="project" value="Ensembl"/>
</dbReference>
<dbReference type="GO" id="GO:0007265">
    <property type="term" value="P:Ras protein signal transduction"/>
    <property type="evidence" value="ECO:0007669"/>
    <property type="project" value="Ensembl"/>
</dbReference>
<dbReference type="GO" id="GO:0006275">
    <property type="term" value="P:regulation of DNA replication"/>
    <property type="evidence" value="ECO:0000250"/>
    <property type="project" value="UniProtKB"/>
</dbReference>
<dbReference type="CDD" id="cd20561">
    <property type="entry name" value="CYCLIN_CCNA2_rpt1"/>
    <property type="match status" value="1"/>
</dbReference>
<dbReference type="CDD" id="cd20564">
    <property type="entry name" value="CYCLIN_CCNA2_rpt2"/>
    <property type="match status" value="1"/>
</dbReference>
<dbReference type="FunFam" id="1.10.472.10:FF:000037">
    <property type="entry name" value="Cyclin-A2"/>
    <property type="match status" value="1"/>
</dbReference>
<dbReference type="Gene3D" id="1.10.472.10">
    <property type="entry name" value="Cyclin-like"/>
    <property type="match status" value="2"/>
</dbReference>
<dbReference type="InterPro" id="IPR039361">
    <property type="entry name" value="Cyclin"/>
</dbReference>
<dbReference type="InterPro" id="IPR032447">
    <property type="entry name" value="Cyclin-A_N"/>
</dbReference>
<dbReference type="InterPro" id="IPR013763">
    <property type="entry name" value="Cyclin-like_dom"/>
</dbReference>
<dbReference type="InterPro" id="IPR036915">
    <property type="entry name" value="Cyclin-like_sf"/>
</dbReference>
<dbReference type="InterPro" id="IPR046965">
    <property type="entry name" value="Cyclin_A/B-like"/>
</dbReference>
<dbReference type="InterPro" id="IPR004367">
    <property type="entry name" value="Cyclin_C-dom"/>
</dbReference>
<dbReference type="InterPro" id="IPR006671">
    <property type="entry name" value="Cyclin_N"/>
</dbReference>
<dbReference type="InterPro" id="IPR048258">
    <property type="entry name" value="Cyclins_cyclin-box"/>
</dbReference>
<dbReference type="PANTHER" id="PTHR10177">
    <property type="entry name" value="CYCLINS"/>
    <property type="match status" value="1"/>
</dbReference>
<dbReference type="Pfam" id="PF02984">
    <property type="entry name" value="Cyclin_C"/>
    <property type="match status" value="1"/>
</dbReference>
<dbReference type="Pfam" id="PF00134">
    <property type="entry name" value="Cyclin_N"/>
    <property type="match status" value="1"/>
</dbReference>
<dbReference type="Pfam" id="PF16500">
    <property type="entry name" value="Cyclin_N2"/>
    <property type="match status" value="1"/>
</dbReference>
<dbReference type="PIRSF" id="PIRSF001771">
    <property type="entry name" value="Cyclin_A_B_D_E"/>
    <property type="match status" value="1"/>
</dbReference>
<dbReference type="SMART" id="SM00385">
    <property type="entry name" value="CYCLIN"/>
    <property type="match status" value="2"/>
</dbReference>
<dbReference type="SMART" id="SM01332">
    <property type="entry name" value="Cyclin_C"/>
    <property type="match status" value="1"/>
</dbReference>
<dbReference type="SUPFAM" id="SSF47954">
    <property type="entry name" value="Cyclin-like"/>
    <property type="match status" value="2"/>
</dbReference>
<dbReference type="PROSITE" id="PS00292">
    <property type="entry name" value="CYCLINS"/>
    <property type="match status" value="1"/>
</dbReference>
<protein>
    <recommendedName>
        <fullName evidence="3">Cyclin-A2</fullName>
        <shortName evidence="4">Cyclin-A</shortName>
    </recommendedName>
</protein>
<name>CCNA2_MESAU</name>
<keyword id="KW-0007">Acetylation</keyword>
<keyword id="KW-0131">Cell cycle</keyword>
<keyword id="KW-0132">Cell division</keyword>
<keyword id="KW-0195">Cyclin</keyword>
<keyword id="KW-0963">Cytoplasm</keyword>
<keyword id="KW-0498">Mitosis</keyword>
<keyword id="KW-0539">Nucleus</keyword>
<keyword id="KW-0597">Phosphoprotein</keyword>
<keyword id="KW-1185">Reference proteome</keyword>
<keyword id="KW-0832">Ubl conjugation</keyword>